<proteinExistence type="inferred from homology"/>
<evidence type="ECO:0000255" key="1">
    <source>
        <dbReference type="HAMAP-Rule" id="MF_01320"/>
    </source>
</evidence>
<evidence type="ECO:0000256" key="2">
    <source>
        <dbReference type="SAM" id="MobiDB-lite"/>
    </source>
</evidence>
<evidence type="ECO:0000305" key="3"/>
<name>RL2_LEGPA</name>
<reference key="1">
    <citation type="journal article" date="2004" name="Nat. Genet.">
        <title>Evidence in the Legionella pneumophila genome for exploitation of host cell functions and high genome plasticity.</title>
        <authorList>
            <person name="Cazalet C."/>
            <person name="Rusniok C."/>
            <person name="Brueggemann H."/>
            <person name="Zidane N."/>
            <person name="Magnier A."/>
            <person name="Ma L."/>
            <person name="Tichit M."/>
            <person name="Jarraud S."/>
            <person name="Bouchier C."/>
            <person name="Vandenesch F."/>
            <person name="Kunst F."/>
            <person name="Etienne J."/>
            <person name="Glaser P."/>
            <person name="Buchrieser C."/>
        </authorList>
    </citation>
    <scope>NUCLEOTIDE SEQUENCE [LARGE SCALE GENOMIC DNA]</scope>
    <source>
        <strain>Paris</strain>
    </source>
</reference>
<dbReference type="EMBL" id="CR628336">
    <property type="protein sequence ID" value="CAH11545.1"/>
    <property type="molecule type" value="Genomic_DNA"/>
</dbReference>
<dbReference type="RefSeq" id="WP_010946081.1">
    <property type="nucleotide sequence ID" value="NC_006368.1"/>
</dbReference>
<dbReference type="SMR" id="Q5X856"/>
<dbReference type="GeneID" id="57034335"/>
<dbReference type="KEGG" id="lpp:lpp0397"/>
<dbReference type="LegioList" id="lpp0397"/>
<dbReference type="HOGENOM" id="CLU_036235_2_1_6"/>
<dbReference type="GO" id="GO:0015934">
    <property type="term" value="C:large ribosomal subunit"/>
    <property type="evidence" value="ECO:0007669"/>
    <property type="project" value="InterPro"/>
</dbReference>
<dbReference type="GO" id="GO:0019843">
    <property type="term" value="F:rRNA binding"/>
    <property type="evidence" value="ECO:0007669"/>
    <property type="project" value="UniProtKB-UniRule"/>
</dbReference>
<dbReference type="GO" id="GO:0003735">
    <property type="term" value="F:structural constituent of ribosome"/>
    <property type="evidence" value="ECO:0007669"/>
    <property type="project" value="InterPro"/>
</dbReference>
<dbReference type="GO" id="GO:0016740">
    <property type="term" value="F:transferase activity"/>
    <property type="evidence" value="ECO:0007669"/>
    <property type="project" value="InterPro"/>
</dbReference>
<dbReference type="GO" id="GO:0002181">
    <property type="term" value="P:cytoplasmic translation"/>
    <property type="evidence" value="ECO:0007669"/>
    <property type="project" value="TreeGrafter"/>
</dbReference>
<dbReference type="FunFam" id="2.30.30.30:FF:000001">
    <property type="entry name" value="50S ribosomal protein L2"/>
    <property type="match status" value="1"/>
</dbReference>
<dbReference type="FunFam" id="2.40.50.140:FF:000003">
    <property type="entry name" value="50S ribosomal protein L2"/>
    <property type="match status" value="1"/>
</dbReference>
<dbReference type="FunFam" id="4.10.950.10:FF:000001">
    <property type="entry name" value="50S ribosomal protein L2"/>
    <property type="match status" value="1"/>
</dbReference>
<dbReference type="Gene3D" id="2.30.30.30">
    <property type="match status" value="1"/>
</dbReference>
<dbReference type="Gene3D" id="2.40.50.140">
    <property type="entry name" value="Nucleic acid-binding proteins"/>
    <property type="match status" value="1"/>
</dbReference>
<dbReference type="Gene3D" id="4.10.950.10">
    <property type="entry name" value="Ribosomal protein L2, domain 3"/>
    <property type="match status" value="1"/>
</dbReference>
<dbReference type="HAMAP" id="MF_01320_B">
    <property type="entry name" value="Ribosomal_uL2_B"/>
    <property type="match status" value="1"/>
</dbReference>
<dbReference type="InterPro" id="IPR012340">
    <property type="entry name" value="NA-bd_OB-fold"/>
</dbReference>
<dbReference type="InterPro" id="IPR014722">
    <property type="entry name" value="Rib_uL2_dom2"/>
</dbReference>
<dbReference type="InterPro" id="IPR002171">
    <property type="entry name" value="Ribosomal_uL2"/>
</dbReference>
<dbReference type="InterPro" id="IPR005880">
    <property type="entry name" value="Ribosomal_uL2_bac/org-type"/>
</dbReference>
<dbReference type="InterPro" id="IPR022669">
    <property type="entry name" value="Ribosomal_uL2_C"/>
</dbReference>
<dbReference type="InterPro" id="IPR022671">
    <property type="entry name" value="Ribosomal_uL2_CS"/>
</dbReference>
<dbReference type="InterPro" id="IPR014726">
    <property type="entry name" value="Ribosomal_uL2_dom3"/>
</dbReference>
<dbReference type="InterPro" id="IPR022666">
    <property type="entry name" value="Ribosomal_uL2_RNA-bd_dom"/>
</dbReference>
<dbReference type="InterPro" id="IPR008991">
    <property type="entry name" value="Translation_prot_SH3-like_sf"/>
</dbReference>
<dbReference type="NCBIfam" id="TIGR01171">
    <property type="entry name" value="rplB_bact"/>
    <property type="match status" value="1"/>
</dbReference>
<dbReference type="PANTHER" id="PTHR13691:SF5">
    <property type="entry name" value="LARGE RIBOSOMAL SUBUNIT PROTEIN UL2M"/>
    <property type="match status" value="1"/>
</dbReference>
<dbReference type="PANTHER" id="PTHR13691">
    <property type="entry name" value="RIBOSOMAL PROTEIN L2"/>
    <property type="match status" value="1"/>
</dbReference>
<dbReference type="Pfam" id="PF00181">
    <property type="entry name" value="Ribosomal_L2"/>
    <property type="match status" value="1"/>
</dbReference>
<dbReference type="Pfam" id="PF03947">
    <property type="entry name" value="Ribosomal_L2_C"/>
    <property type="match status" value="1"/>
</dbReference>
<dbReference type="PIRSF" id="PIRSF002158">
    <property type="entry name" value="Ribosomal_L2"/>
    <property type="match status" value="1"/>
</dbReference>
<dbReference type="SMART" id="SM01383">
    <property type="entry name" value="Ribosomal_L2"/>
    <property type="match status" value="1"/>
</dbReference>
<dbReference type="SMART" id="SM01382">
    <property type="entry name" value="Ribosomal_L2_C"/>
    <property type="match status" value="1"/>
</dbReference>
<dbReference type="SUPFAM" id="SSF50249">
    <property type="entry name" value="Nucleic acid-binding proteins"/>
    <property type="match status" value="1"/>
</dbReference>
<dbReference type="SUPFAM" id="SSF50104">
    <property type="entry name" value="Translation proteins SH3-like domain"/>
    <property type="match status" value="1"/>
</dbReference>
<dbReference type="PROSITE" id="PS00467">
    <property type="entry name" value="RIBOSOMAL_L2"/>
    <property type="match status" value="1"/>
</dbReference>
<comment type="function">
    <text evidence="1">One of the primary rRNA binding proteins. Required for association of the 30S and 50S subunits to form the 70S ribosome, for tRNA binding and peptide bond formation. It has been suggested to have peptidyltransferase activity; this is somewhat controversial. Makes several contacts with the 16S rRNA in the 70S ribosome.</text>
</comment>
<comment type="subunit">
    <text evidence="1">Part of the 50S ribosomal subunit. Forms a bridge to the 30S subunit in the 70S ribosome.</text>
</comment>
<comment type="similarity">
    <text evidence="1">Belongs to the universal ribosomal protein uL2 family.</text>
</comment>
<feature type="chain" id="PRO_0000237199" description="Large ribosomal subunit protein uL2">
    <location>
        <begin position="1"/>
        <end position="275"/>
    </location>
</feature>
<feature type="region of interest" description="Disordered" evidence="2">
    <location>
        <begin position="223"/>
        <end position="260"/>
    </location>
</feature>
<organism>
    <name type="scientific">Legionella pneumophila (strain Paris)</name>
    <dbReference type="NCBI Taxonomy" id="297246"/>
    <lineage>
        <taxon>Bacteria</taxon>
        <taxon>Pseudomonadati</taxon>
        <taxon>Pseudomonadota</taxon>
        <taxon>Gammaproteobacteria</taxon>
        <taxon>Legionellales</taxon>
        <taxon>Legionellaceae</taxon>
        <taxon>Legionella</taxon>
    </lineage>
</organism>
<accession>Q5X856</accession>
<sequence>MALLKSKPTSPGKRGEIRVVHHDIYKGKPHAALVEKLKKTGGRNNQGRITVRHIGGGQRQKYRIIDFKRNKDGILGRVERLEYDPNRTALIALISYKDGEKRYIIAPSNLEVGATIQSGADSPISVGNCLPLKNIPVGTTIHCVEMKPGKGAQMLRSAGCSGQLVAKEGVYATLRLRSGEMRKIHVLCRAVIGEVSNSEHNLRALGKAGAKRWRGIRPTVRGVAMNPVDHPHGGGEGRTSGGRHPVSPWGLPTKGYKTRSNKRTDTFIVRGRKKK</sequence>
<protein>
    <recommendedName>
        <fullName evidence="1">Large ribosomal subunit protein uL2</fullName>
    </recommendedName>
    <alternativeName>
        <fullName evidence="3">50S ribosomal protein L2</fullName>
    </alternativeName>
</protein>
<keyword id="KW-0687">Ribonucleoprotein</keyword>
<keyword id="KW-0689">Ribosomal protein</keyword>
<keyword id="KW-0694">RNA-binding</keyword>
<keyword id="KW-0699">rRNA-binding</keyword>
<gene>
    <name evidence="1" type="primary">rplB</name>
    <name type="ordered locus">lpp0397</name>
</gene>